<proteinExistence type="inferred from homology"/>
<comment type="function">
    <text evidence="1">Displays ATPase and GTPase activities.</text>
</comment>
<comment type="similarity">
    <text evidence="1">Belongs to the RapZ-like family.</text>
</comment>
<sequence>MRLIVVSGQSGAGKSVALRVLEDLGYYCVDNLPVSLLTAFIQSVQGSQQNVAVSIDIRNLPKEPSLVQDVLDQLKQNNDVSMLFLDASKETLLKRYSETRRIHPLSLSQSKPSLAQAIELEKQLLGPLKEQADLLLDSSNQSLHELSETVRMRIEGRERKDLVMVFQSFGFKYGLPTDADYVFDVRFLPNPHWEPDLRPLTGLDAPIKSFLEGHSEVMELKQQIQKFFEYWLPMLEKNNRSYLTIAIGCTGGKHRSVYLTQQLGEYFAQLGHQVQIRHTSLEKQQS</sequence>
<feature type="chain" id="PRO_1000147377" description="Nucleotide-binding protein VCM66_2453">
    <location>
        <begin position="1"/>
        <end position="286"/>
    </location>
</feature>
<feature type="binding site" evidence="1">
    <location>
        <begin position="8"/>
        <end position="15"/>
    </location>
    <ligand>
        <name>ATP</name>
        <dbReference type="ChEBI" id="CHEBI:30616"/>
    </ligand>
</feature>
<feature type="binding site" evidence="1">
    <location>
        <begin position="56"/>
        <end position="59"/>
    </location>
    <ligand>
        <name>GTP</name>
        <dbReference type="ChEBI" id="CHEBI:37565"/>
    </ligand>
</feature>
<dbReference type="EMBL" id="CP001233">
    <property type="protein sequence ID" value="ACP06750.1"/>
    <property type="molecule type" value="Genomic_DNA"/>
</dbReference>
<dbReference type="SMR" id="C3LRJ5"/>
<dbReference type="KEGG" id="vcm:VCM66_2453"/>
<dbReference type="HOGENOM" id="CLU_059558_1_1_6"/>
<dbReference type="Proteomes" id="UP000001217">
    <property type="component" value="Chromosome I"/>
</dbReference>
<dbReference type="GO" id="GO:0005524">
    <property type="term" value="F:ATP binding"/>
    <property type="evidence" value="ECO:0007669"/>
    <property type="project" value="UniProtKB-UniRule"/>
</dbReference>
<dbReference type="GO" id="GO:0005525">
    <property type="term" value="F:GTP binding"/>
    <property type="evidence" value="ECO:0007669"/>
    <property type="project" value="UniProtKB-UniRule"/>
</dbReference>
<dbReference type="HAMAP" id="MF_00636">
    <property type="entry name" value="RapZ_like"/>
    <property type="match status" value="1"/>
</dbReference>
<dbReference type="InterPro" id="IPR027417">
    <property type="entry name" value="P-loop_NTPase"/>
</dbReference>
<dbReference type="InterPro" id="IPR005337">
    <property type="entry name" value="RapZ-like"/>
</dbReference>
<dbReference type="InterPro" id="IPR053930">
    <property type="entry name" value="RapZ-like_N"/>
</dbReference>
<dbReference type="InterPro" id="IPR053931">
    <property type="entry name" value="RapZ_C"/>
</dbReference>
<dbReference type="NCBIfam" id="NF003828">
    <property type="entry name" value="PRK05416.1"/>
    <property type="match status" value="1"/>
</dbReference>
<dbReference type="PANTHER" id="PTHR30448">
    <property type="entry name" value="RNASE ADAPTER PROTEIN RAPZ"/>
    <property type="match status" value="1"/>
</dbReference>
<dbReference type="PANTHER" id="PTHR30448:SF0">
    <property type="entry name" value="RNASE ADAPTER PROTEIN RAPZ"/>
    <property type="match status" value="1"/>
</dbReference>
<dbReference type="Pfam" id="PF22740">
    <property type="entry name" value="PapZ_C"/>
    <property type="match status" value="1"/>
</dbReference>
<dbReference type="Pfam" id="PF03668">
    <property type="entry name" value="RapZ-like_N"/>
    <property type="match status" value="1"/>
</dbReference>
<dbReference type="PIRSF" id="PIRSF005052">
    <property type="entry name" value="P-loopkin"/>
    <property type="match status" value="1"/>
</dbReference>
<dbReference type="SUPFAM" id="SSF52540">
    <property type="entry name" value="P-loop containing nucleoside triphosphate hydrolases"/>
    <property type="match status" value="1"/>
</dbReference>
<protein>
    <recommendedName>
        <fullName evidence="1">Nucleotide-binding protein VCM66_2453</fullName>
    </recommendedName>
</protein>
<name>Y2453_VIBCM</name>
<keyword id="KW-0067">ATP-binding</keyword>
<keyword id="KW-0342">GTP-binding</keyword>
<keyword id="KW-0547">Nucleotide-binding</keyword>
<accession>C3LRJ5</accession>
<gene>
    <name type="ordered locus">VCM66_2453</name>
</gene>
<organism>
    <name type="scientific">Vibrio cholerae serotype O1 (strain M66-2)</name>
    <dbReference type="NCBI Taxonomy" id="579112"/>
    <lineage>
        <taxon>Bacteria</taxon>
        <taxon>Pseudomonadati</taxon>
        <taxon>Pseudomonadota</taxon>
        <taxon>Gammaproteobacteria</taxon>
        <taxon>Vibrionales</taxon>
        <taxon>Vibrionaceae</taxon>
        <taxon>Vibrio</taxon>
    </lineage>
</organism>
<evidence type="ECO:0000255" key="1">
    <source>
        <dbReference type="HAMAP-Rule" id="MF_00636"/>
    </source>
</evidence>
<reference key="1">
    <citation type="journal article" date="2008" name="PLoS ONE">
        <title>A recalibrated molecular clock and independent origins for the cholera pandemic clones.</title>
        <authorList>
            <person name="Feng L."/>
            <person name="Reeves P.R."/>
            <person name="Lan R."/>
            <person name="Ren Y."/>
            <person name="Gao C."/>
            <person name="Zhou Z."/>
            <person name="Ren Y."/>
            <person name="Cheng J."/>
            <person name="Wang W."/>
            <person name="Wang J."/>
            <person name="Qian W."/>
            <person name="Li D."/>
            <person name="Wang L."/>
        </authorList>
    </citation>
    <scope>NUCLEOTIDE SEQUENCE [LARGE SCALE GENOMIC DNA]</scope>
    <source>
        <strain>M66-2</strain>
    </source>
</reference>